<keyword id="KW-0472">Membrane</keyword>
<keyword id="KW-1185">Reference proteome</keyword>
<keyword id="KW-0812">Transmembrane</keyword>
<keyword id="KW-1133">Transmembrane helix</keyword>
<evidence type="ECO:0000255" key="1"/>
<evidence type="ECO:0000305" key="2"/>
<dbReference type="EMBL" id="S70343">
    <property type="protein sequence ID" value="AAB30637.1"/>
    <property type="molecule type" value="mRNA"/>
</dbReference>
<dbReference type="RefSeq" id="NP_001028136.3">
    <property type="nucleotide sequence ID" value="NM_001032964.3"/>
</dbReference>
<dbReference type="SMR" id="Q28849"/>
<dbReference type="FunCoup" id="Q28849">
    <property type="interactions" value="53"/>
</dbReference>
<dbReference type="STRING" id="9544.ENSMMUP00000014604"/>
<dbReference type="GeneID" id="613023"/>
<dbReference type="KEGG" id="mcc:613023"/>
<dbReference type="CTD" id="6006"/>
<dbReference type="InParanoid" id="Q28849"/>
<dbReference type="OrthoDB" id="534912at2759"/>
<dbReference type="Proteomes" id="UP000006718">
    <property type="component" value="Unassembled WGS sequence"/>
</dbReference>
<dbReference type="GO" id="GO:0005886">
    <property type="term" value="C:plasma membrane"/>
    <property type="evidence" value="ECO:0000318"/>
    <property type="project" value="GO_Central"/>
</dbReference>
<dbReference type="GO" id="GO:0008519">
    <property type="term" value="F:ammonium channel activity"/>
    <property type="evidence" value="ECO:0000318"/>
    <property type="project" value="GO_Central"/>
</dbReference>
<dbReference type="GO" id="GO:0097272">
    <property type="term" value="P:ammonium homeostasis"/>
    <property type="evidence" value="ECO:0000318"/>
    <property type="project" value="GO_Central"/>
</dbReference>
<dbReference type="GO" id="GO:0072488">
    <property type="term" value="P:ammonium transmembrane transport"/>
    <property type="evidence" value="ECO:0000318"/>
    <property type="project" value="GO_Central"/>
</dbReference>
<dbReference type="FunFam" id="1.10.3430.10:FF:000009">
    <property type="entry name" value="Blood group Rh(D) polypeptide"/>
    <property type="match status" value="1"/>
</dbReference>
<dbReference type="Gene3D" id="1.10.3430.10">
    <property type="entry name" value="Ammonium transporter AmtB like domains"/>
    <property type="match status" value="1"/>
</dbReference>
<dbReference type="InterPro" id="IPR029020">
    <property type="entry name" value="Ammonium/urea_transptr"/>
</dbReference>
<dbReference type="InterPro" id="IPR024041">
    <property type="entry name" value="NH4_transpt_AmtB-like_dom"/>
</dbReference>
<dbReference type="InterPro" id="IPR002229">
    <property type="entry name" value="RhesusRHD"/>
</dbReference>
<dbReference type="PANTHER" id="PTHR11730">
    <property type="entry name" value="AMMONIUM TRANSPORTER"/>
    <property type="match status" value="1"/>
</dbReference>
<dbReference type="PANTHER" id="PTHR11730:SF43">
    <property type="entry name" value="BLOOD GROUP RH(CE) POLYPEPTIDE-RELATED"/>
    <property type="match status" value="1"/>
</dbReference>
<dbReference type="Pfam" id="PF00909">
    <property type="entry name" value="Ammonium_transp"/>
    <property type="match status" value="1"/>
</dbReference>
<dbReference type="PRINTS" id="PR00342">
    <property type="entry name" value="RHESUSRHD"/>
</dbReference>
<dbReference type="SUPFAM" id="SSF111352">
    <property type="entry name" value="Ammonium transporter"/>
    <property type="match status" value="1"/>
</dbReference>
<feature type="chain" id="PRO_0000168195" description="RH-like protein">
    <location>
        <begin position="1"/>
        <end position="417"/>
    </location>
</feature>
<feature type="transmembrane region" description="Helical" evidence="1">
    <location>
        <begin position="12"/>
        <end position="32"/>
    </location>
</feature>
<feature type="transmembrane region" description="Helical" evidence="1">
    <location>
        <begin position="44"/>
        <end position="64"/>
    </location>
</feature>
<feature type="transmembrane region" description="Helical" evidence="1">
    <location>
        <begin position="77"/>
        <end position="97"/>
    </location>
</feature>
<feature type="transmembrane region" description="Helical" evidence="1">
    <location>
        <begin position="125"/>
        <end position="145"/>
    </location>
</feature>
<feature type="transmembrane region" description="Helical" evidence="1">
    <location>
        <begin position="172"/>
        <end position="192"/>
    </location>
</feature>
<feature type="transmembrane region" description="Helical" evidence="1">
    <location>
        <begin position="203"/>
        <end position="223"/>
    </location>
</feature>
<feature type="transmembrane region" description="Helical" evidence="1">
    <location>
        <begin position="238"/>
        <end position="258"/>
    </location>
</feature>
<feature type="transmembrane region" description="Helical" evidence="1">
    <location>
        <begin position="265"/>
        <end position="285"/>
    </location>
</feature>
<feature type="transmembrane region" description="Helical" evidence="1">
    <location>
        <begin position="287"/>
        <end position="307"/>
    </location>
</feature>
<feature type="transmembrane region" description="Helical" evidence="1">
    <location>
        <begin position="331"/>
        <end position="351"/>
    </location>
</feature>
<feature type="transmembrane region" description="Helical" evidence="1">
    <location>
        <begin position="358"/>
        <end position="378"/>
    </location>
</feature>
<feature type="sequence variant" description="In Mac-B.">
    <location>
        <begin position="2"/>
        <end position="56"/>
    </location>
</feature>
<feature type="sequence variant" description="In Mac-B.">
    <original>R</original>
    <variation>K</variation>
    <location>
        <position position="71"/>
    </location>
</feature>
<feature type="sequence variant" description="In Mac-B.">
    <original>A</original>
    <variation>V</variation>
    <location>
        <position position="107"/>
    </location>
</feature>
<feature type="sequence variant" description="In Mac-B.">
    <original>P</original>
    <variation>L</variation>
    <location>
        <position position="192"/>
    </location>
</feature>
<feature type="sequence variant" description="In Mac-B.">
    <original>G</original>
    <variation>R</variation>
    <location>
        <position position="262"/>
    </location>
</feature>
<feature type="sequence variant" description="In Mac-B.">
    <original>Y</original>
    <variation>C</variation>
    <location>
        <position position="343"/>
    </location>
</feature>
<protein>
    <recommendedName>
        <fullName>RH-like protein</fullName>
    </recommendedName>
    <alternativeName>
        <fullName>Rhesus-like protein</fullName>
    </alternativeName>
</protein>
<accession>Q28849</accession>
<organism>
    <name type="scientific">Macaca mulatta</name>
    <name type="common">Rhesus macaque</name>
    <dbReference type="NCBI Taxonomy" id="9544"/>
    <lineage>
        <taxon>Eukaryota</taxon>
        <taxon>Metazoa</taxon>
        <taxon>Chordata</taxon>
        <taxon>Craniata</taxon>
        <taxon>Vertebrata</taxon>
        <taxon>Euteleostomi</taxon>
        <taxon>Mammalia</taxon>
        <taxon>Eutheria</taxon>
        <taxon>Euarchontoglires</taxon>
        <taxon>Primates</taxon>
        <taxon>Haplorrhini</taxon>
        <taxon>Catarrhini</taxon>
        <taxon>Cercopithecidae</taxon>
        <taxon>Cercopithecinae</taxon>
        <taxon>Macaca</taxon>
    </lineage>
</organism>
<proteinExistence type="evidence at transcript level"/>
<comment type="function">
    <text>May be part of an oligomeric complex which is likely to have a transport or channel function in the erythrocyte membrane.</text>
</comment>
<comment type="subcellular location">
    <subcellularLocation>
        <location>Membrane</location>
        <topology>Multi-pass membrane protein</topology>
    </subcellularLocation>
</comment>
<comment type="similarity">
    <text evidence="2">Belongs to the ammonium transporter (TC 2.A.49) family. Rh subfamily.</text>
</comment>
<reference key="1">
    <citation type="journal article" date="1994" name="J. Mol. Evol.">
        <title>Molecular characterization of the Rh-like locus and gene transcripts from the rhesus monkey (Macaca mulatta).</title>
        <authorList>
            <person name="Mouro I."/>
            <person name="le van Kim C."/>
            <person name="Cherif-Zahar B."/>
            <person name="Salvignol I."/>
            <person name="Blancher A."/>
            <person name="Cartron J.-P."/>
            <person name="Colin Y."/>
        </authorList>
    </citation>
    <scope>NUCLEOTIDE SEQUENCE [MRNA]</scope>
    <source>
        <tissue>Bone marrow</tissue>
    </source>
</reference>
<name>RHL_MACMU</name>
<sequence length="417" mass="45803">MSSKYPRSVRCCLPLWALTLEAALILLFFFFTYYDASLEDQKGLVASYQVCQDLTVMAVLGLGFFTSNLRRNSWSSVAFNLFLLALGVQWAILLDGFLSQFSPGKVAIKLFSIRLATRSTMSMLISMNAVLGKVNLVQLVVMELVELTVFGTMRIVINNIFKIDYGMNMMHIHVFAAYFGLTVAWCLPKPLPKGTEDKYQTTTSPSLFAMLGTLFLWMFWPTFNSALLLNPIERKNAVFSTYYALAVSAVTAISVSSLAHPGGKINMTYMHNAALAGGVALSASCHVIHSPWIAMVLGLVAGLISIGGAKCLPVCFNRVLGIHESHSVHYTFGLPALLGEITYIVLMALRVVWASSNMIGFQVLLSTGTLSLAMAMSITSGLLTGLLLNLKIWKGPHVAKYFDDQAFWEFPHLAVGF</sequence>